<sequence length="344" mass="38976">MEARLKELKQKALELIEEAKELKGLNDVRVAYLGKKGPITEVLRGMGKLSAEERPRMGALVNEVREAIQTRLDDKISNLEKAVIEAKLATETIDVTLPGRPVETGCHHPLTAVVEQIEDVFIGMGYEVAEGTEVEKDYYNFEALNLPKDHPARDMQDTFYITEETLLRTHTSSVQARTMENNKEKGPIKIICPGKVYRRDDDDATHSHQFMQIEGLVIDKNIRMSDLKGTLQVFVKKMFGEDREIRLRPSFFPFTEPSVEMDISCMMCHGKGCGTCKGTGWIEILGAGMVHPNVLEMAGYDSKEYQGFAFGMGAERIAMLKYGVDDIRHFYTNDVRFLQQFKRA</sequence>
<name>SYFA_BACHK</name>
<gene>
    <name evidence="1" type="primary">pheS</name>
    <name type="ordered locus">BT9727_4294</name>
</gene>
<evidence type="ECO:0000255" key="1">
    <source>
        <dbReference type="HAMAP-Rule" id="MF_00281"/>
    </source>
</evidence>
<dbReference type="EC" id="6.1.1.20" evidence="1"/>
<dbReference type="EMBL" id="AE017355">
    <property type="protein sequence ID" value="AAT63532.1"/>
    <property type="molecule type" value="Genomic_DNA"/>
</dbReference>
<dbReference type="RefSeq" id="WP_000388219.1">
    <property type="nucleotide sequence ID" value="NC_005957.1"/>
</dbReference>
<dbReference type="RefSeq" id="YP_038609.1">
    <property type="nucleotide sequence ID" value="NC_005957.1"/>
</dbReference>
<dbReference type="SMR" id="Q6HCW7"/>
<dbReference type="GeneID" id="83638271"/>
<dbReference type="KEGG" id="btk:BT9727_4294"/>
<dbReference type="PATRIC" id="fig|281309.8.peg.4577"/>
<dbReference type="HOGENOM" id="CLU_025086_0_1_9"/>
<dbReference type="Proteomes" id="UP000001301">
    <property type="component" value="Chromosome"/>
</dbReference>
<dbReference type="GO" id="GO:0005737">
    <property type="term" value="C:cytoplasm"/>
    <property type="evidence" value="ECO:0007669"/>
    <property type="project" value="UniProtKB-SubCell"/>
</dbReference>
<dbReference type="GO" id="GO:0005524">
    <property type="term" value="F:ATP binding"/>
    <property type="evidence" value="ECO:0007669"/>
    <property type="project" value="UniProtKB-UniRule"/>
</dbReference>
<dbReference type="GO" id="GO:0140096">
    <property type="term" value="F:catalytic activity, acting on a protein"/>
    <property type="evidence" value="ECO:0007669"/>
    <property type="project" value="UniProtKB-ARBA"/>
</dbReference>
<dbReference type="GO" id="GO:0000287">
    <property type="term" value="F:magnesium ion binding"/>
    <property type="evidence" value="ECO:0007669"/>
    <property type="project" value="UniProtKB-UniRule"/>
</dbReference>
<dbReference type="GO" id="GO:0004826">
    <property type="term" value="F:phenylalanine-tRNA ligase activity"/>
    <property type="evidence" value="ECO:0007669"/>
    <property type="project" value="UniProtKB-UniRule"/>
</dbReference>
<dbReference type="GO" id="GO:0016740">
    <property type="term" value="F:transferase activity"/>
    <property type="evidence" value="ECO:0007669"/>
    <property type="project" value="UniProtKB-ARBA"/>
</dbReference>
<dbReference type="GO" id="GO:0000049">
    <property type="term" value="F:tRNA binding"/>
    <property type="evidence" value="ECO:0007669"/>
    <property type="project" value="InterPro"/>
</dbReference>
<dbReference type="GO" id="GO:0006432">
    <property type="term" value="P:phenylalanyl-tRNA aminoacylation"/>
    <property type="evidence" value="ECO:0007669"/>
    <property type="project" value="UniProtKB-UniRule"/>
</dbReference>
<dbReference type="CDD" id="cd00496">
    <property type="entry name" value="PheRS_alpha_core"/>
    <property type="match status" value="1"/>
</dbReference>
<dbReference type="FunFam" id="3.30.930.10:FF:000003">
    <property type="entry name" value="Phenylalanine--tRNA ligase alpha subunit"/>
    <property type="match status" value="1"/>
</dbReference>
<dbReference type="Gene3D" id="3.30.930.10">
    <property type="entry name" value="Bira Bifunctional Protein, Domain 2"/>
    <property type="match status" value="1"/>
</dbReference>
<dbReference type="HAMAP" id="MF_00281">
    <property type="entry name" value="Phe_tRNA_synth_alpha1"/>
    <property type="match status" value="1"/>
</dbReference>
<dbReference type="InterPro" id="IPR006195">
    <property type="entry name" value="aa-tRNA-synth_II"/>
</dbReference>
<dbReference type="InterPro" id="IPR045864">
    <property type="entry name" value="aa-tRNA-synth_II/BPL/LPL"/>
</dbReference>
<dbReference type="InterPro" id="IPR004529">
    <property type="entry name" value="Phe-tRNA-synth_IIc_asu"/>
</dbReference>
<dbReference type="InterPro" id="IPR004188">
    <property type="entry name" value="Phe-tRNA_ligase_II_N"/>
</dbReference>
<dbReference type="InterPro" id="IPR022911">
    <property type="entry name" value="Phe_tRNA_ligase_alpha1_bac"/>
</dbReference>
<dbReference type="InterPro" id="IPR002319">
    <property type="entry name" value="Phenylalanyl-tRNA_Synthase"/>
</dbReference>
<dbReference type="InterPro" id="IPR010978">
    <property type="entry name" value="tRNA-bd_arm"/>
</dbReference>
<dbReference type="NCBIfam" id="TIGR00468">
    <property type="entry name" value="pheS"/>
    <property type="match status" value="1"/>
</dbReference>
<dbReference type="PANTHER" id="PTHR11538:SF41">
    <property type="entry name" value="PHENYLALANINE--TRNA LIGASE, MITOCHONDRIAL"/>
    <property type="match status" value="1"/>
</dbReference>
<dbReference type="PANTHER" id="PTHR11538">
    <property type="entry name" value="PHENYLALANYL-TRNA SYNTHETASE"/>
    <property type="match status" value="1"/>
</dbReference>
<dbReference type="Pfam" id="PF02912">
    <property type="entry name" value="Phe_tRNA-synt_N"/>
    <property type="match status" value="1"/>
</dbReference>
<dbReference type="Pfam" id="PF01409">
    <property type="entry name" value="tRNA-synt_2d"/>
    <property type="match status" value="1"/>
</dbReference>
<dbReference type="SUPFAM" id="SSF55681">
    <property type="entry name" value="Class II aaRS and biotin synthetases"/>
    <property type="match status" value="1"/>
</dbReference>
<dbReference type="SUPFAM" id="SSF46589">
    <property type="entry name" value="tRNA-binding arm"/>
    <property type="match status" value="1"/>
</dbReference>
<dbReference type="PROSITE" id="PS50862">
    <property type="entry name" value="AA_TRNA_LIGASE_II"/>
    <property type="match status" value="1"/>
</dbReference>
<organism>
    <name type="scientific">Bacillus thuringiensis subsp. konkukian (strain 97-27)</name>
    <dbReference type="NCBI Taxonomy" id="281309"/>
    <lineage>
        <taxon>Bacteria</taxon>
        <taxon>Bacillati</taxon>
        <taxon>Bacillota</taxon>
        <taxon>Bacilli</taxon>
        <taxon>Bacillales</taxon>
        <taxon>Bacillaceae</taxon>
        <taxon>Bacillus</taxon>
        <taxon>Bacillus cereus group</taxon>
    </lineage>
</organism>
<accession>Q6HCW7</accession>
<reference key="1">
    <citation type="journal article" date="2006" name="J. Bacteriol.">
        <title>Pathogenomic sequence analysis of Bacillus cereus and Bacillus thuringiensis isolates closely related to Bacillus anthracis.</title>
        <authorList>
            <person name="Han C.S."/>
            <person name="Xie G."/>
            <person name="Challacombe J.F."/>
            <person name="Altherr M.R."/>
            <person name="Bhotika S.S."/>
            <person name="Bruce D."/>
            <person name="Campbell C.S."/>
            <person name="Campbell M.L."/>
            <person name="Chen J."/>
            <person name="Chertkov O."/>
            <person name="Cleland C."/>
            <person name="Dimitrijevic M."/>
            <person name="Doggett N.A."/>
            <person name="Fawcett J.J."/>
            <person name="Glavina T."/>
            <person name="Goodwin L.A."/>
            <person name="Hill K.K."/>
            <person name="Hitchcock P."/>
            <person name="Jackson P.J."/>
            <person name="Keim P."/>
            <person name="Kewalramani A.R."/>
            <person name="Longmire J."/>
            <person name="Lucas S."/>
            <person name="Malfatti S."/>
            <person name="McMurry K."/>
            <person name="Meincke L.J."/>
            <person name="Misra M."/>
            <person name="Moseman B.L."/>
            <person name="Mundt M."/>
            <person name="Munk A.C."/>
            <person name="Okinaka R.T."/>
            <person name="Parson-Quintana B."/>
            <person name="Reilly L.P."/>
            <person name="Richardson P."/>
            <person name="Robinson D.L."/>
            <person name="Rubin E."/>
            <person name="Saunders E."/>
            <person name="Tapia R."/>
            <person name="Tesmer J.G."/>
            <person name="Thayer N."/>
            <person name="Thompson L.S."/>
            <person name="Tice H."/>
            <person name="Ticknor L.O."/>
            <person name="Wills P.L."/>
            <person name="Brettin T.S."/>
            <person name="Gilna P."/>
        </authorList>
    </citation>
    <scope>NUCLEOTIDE SEQUENCE [LARGE SCALE GENOMIC DNA]</scope>
    <source>
        <strain>97-27</strain>
    </source>
</reference>
<keyword id="KW-0030">Aminoacyl-tRNA synthetase</keyword>
<keyword id="KW-0067">ATP-binding</keyword>
<keyword id="KW-0963">Cytoplasm</keyword>
<keyword id="KW-0436">Ligase</keyword>
<keyword id="KW-0460">Magnesium</keyword>
<keyword id="KW-0479">Metal-binding</keyword>
<keyword id="KW-0547">Nucleotide-binding</keyword>
<keyword id="KW-0648">Protein biosynthesis</keyword>
<feature type="chain" id="PRO_0000126664" description="Phenylalanine--tRNA ligase alpha subunit">
    <location>
        <begin position="1"/>
        <end position="344"/>
    </location>
</feature>
<feature type="binding site" evidence="1">
    <location>
        <position position="256"/>
    </location>
    <ligand>
        <name>Mg(2+)</name>
        <dbReference type="ChEBI" id="CHEBI:18420"/>
        <note>shared with beta subunit</note>
    </ligand>
</feature>
<protein>
    <recommendedName>
        <fullName evidence="1">Phenylalanine--tRNA ligase alpha subunit</fullName>
        <ecNumber evidence="1">6.1.1.20</ecNumber>
    </recommendedName>
    <alternativeName>
        <fullName evidence="1">Phenylalanyl-tRNA synthetase alpha subunit</fullName>
        <shortName evidence="1">PheRS</shortName>
    </alternativeName>
</protein>
<comment type="catalytic activity">
    <reaction evidence="1">
        <text>tRNA(Phe) + L-phenylalanine + ATP = L-phenylalanyl-tRNA(Phe) + AMP + diphosphate + H(+)</text>
        <dbReference type="Rhea" id="RHEA:19413"/>
        <dbReference type="Rhea" id="RHEA-COMP:9668"/>
        <dbReference type="Rhea" id="RHEA-COMP:9699"/>
        <dbReference type="ChEBI" id="CHEBI:15378"/>
        <dbReference type="ChEBI" id="CHEBI:30616"/>
        <dbReference type="ChEBI" id="CHEBI:33019"/>
        <dbReference type="ChEBI" id="CHEBI:58095"/>
        <dbReference type="ChEBI" id="CHEBI:78442"/>
        <dbReference type="ChEBI" id="CHEBI:78531"/>
        <dbReference type="ChEBI" id="CHEBI:456215"/>
        <dbReference type="EC" id="6.1.1.20"/>
    </reaction>
</comment>
<comment type="cofactor">
    <cofactor evidence="1">
        <name>Mg(2+)</name>
        <dbReference type="ChEBI" id="CHEBI:18420"/>
    </cofactor>
    <text evidence="1">Binds 2 magnesium ions per tetramer.</text>
</comment>
<comment type="subunit">
    <text evidence="1">Tetramer of two alpha and two beta subunits.</text>
</comment>
<comment type="subcellular location">
    <subcellularLocation>
        <location evidence="1">Cytoplasm</location>
    </subcellularLocation>
</comment>
<comment type="similarity">
    <text evidence="1">Belongs to the class-II aminoacyl-tRNA synthetase family. Phe-tRNA synthetase alpha subunit type 1 subfamily.</text>
</comment>
<proteinExistence type="inferred from homology"/>